<protein>
    <recommendedName>
        <fullName evidence="1">UDP-N-acetylglucosamine 1-carboxyvinyltransferase</fullName>
        <ecNumber evidence="1">2.5.1.7</ecNumber>
    </recommendedName>
    <alternativeName>
        <fullName evidence="1">Enoylpyruvate transferase</fullName>
    </alternativeName>
    <alternativeName>
        <fullName evidence="1">UDP-N-acetylglucosamine enolpyruvyl transferase</fullName>
        <shortName evidence="1">EPT</shortName>
    </alternativeName>
</protein>
<evidence type="ECO:0000255" key="1">
    <source>
        <dbReference type="HAMAP-Rule" id="MF_00111"/>
    </source>
</evidence>
<keyword id="KW-0131">Cell cycle</keyword>
<keyword id="KW-0132">Cell division</keyword>
<keyword id="KW-0133">Cell shape</keyword>
<keyword id="KW-0961">Cell wall biogenesis/degradation</keyword>
<keyword id="KW-0963">Cytoplasm</keyword>
<keyword id="KW-0573">Peptidoglycan synthesis</keyword>
<keyword id="KW-0670">Pyruvate</keyword>
<keyword id="KW-0808">Transferase</keyword>
<proteinExistence type="inferred from homology"/>
<organism>
    <name type="scientific">Escherichia coli O8 (strain IAI1)</name>
    <dbReference type="NCBI Taxonomy" id="585034"/>
    <lineage>
        <taxon>Bacteria</taxon>
        <taxon>Pseudomonadati</taxon>
        <taxon>Pseudomonadota</taxon>
        <taxon>Gammaproteobacteria</taxon>
        <taxon>Enterobacterales</taxon>
        <taxon>Enterobacteriaceae</taxon>
        <taxon>Escherichia</taxon>
    </lineage>
</organism>
<accession>B7M095</accession>
<comment type="function">
    <text evidence="1">Cell wall formation. Adds enolpyruvyl to UDP-N-acetylglucosamine.</text>
</comment>
<comment type="catalytic activity">
    <reaction evidence="1">
        <text>phosphoenolpyruvate + UDP-N-acetyl-alpha-D-glucosamine = UDP-N-acetyl-3-O-(1-carboxyvinyl)-alpha-D-glucosamine + phosphate</text>
        <dbReference type="Rhea" id="RHEA:18681"/>
        <dbReference type="ChEBI" id="CHEBI:43474"/>
        <dbReference type="ChEBI" id="CHEBI:57705"/>
        <dbReference type="ChEBI" id="CHEBI:58702"/>
        <dbReference type="ChEBI" id="CHEBI:68483"/>
        <dbReference type="EC" id="2.5.1.7"/>
    </reaction>
</comment>
<comment type="pathway">
    <text evidence="1">Cell wall biogenesis; peptidoglycan biosynthesis.</text>
</comment>
<comment type="subcellular location">
    <subcellularLocation>
        <location evidence="1">Cytoplasm</location>
    </subcellularLocation>
</comment>
<comment type="similarity">
    <text evidence="1">Belongs to the EPSP synthase family. MurA subfamily.</text>
</comment>
<sequence length="419" mass="44818">MDKFRVQGPTKLQGEVTISGAKNAALPILFAALLAEEPVEIQNVPKLKDVDTSMKLLSQLGAKVERNGSVHIDARDVNVFCAPYDLVKTMRASIWALGPLVARFGQGQVSLPGGCTIGARPVDLHISGLEQLGATIKLEEGYVKASVDGRLKGAHIVMDKVSVGATVTIMCAATLAEGTTIIENAAREPEIVDTANFLITLGAKISGQGTDRIVIEGVERLGGGVYRVLPDRIETGTFLVAAAISRGKIICRNAQPDTLDAVLAKLRDAGADIEVGEDWISLDMHGKRPKAVNVRTAPHPAFPTDMQAQFTLLNLVAEGTGFITETVFENRFMHVPELSRMGAHAEIESNTVICHGVEKLSGAQVMATDLRASASLVLAGCIAEGTTVVDRIYHIDRGYERIEDKLRALGANIERVKGE</sequence>
<reference key="1">
    <citation type="journal article" date="2009" name="PLoS Genet.">
        <title>Organised genome dynamics in the Escherichia coli species results in highly diverse adaptive paths.</title>
        <authorList>
            <person name="Touchon M."/>
            <person name="Hoede C."/>
            <person name="Tenaillon O."/>
            <person name="Barbe V."/>
            <person name="Baeriswyl S."/>
            <person name="Bidet P."/>
            <person name="Bingen E."/>
            <person name="Bonacorsi S."/>
            <person name="Bouchier C."/>
            <person name="Bouvet O."/>
            <person name="Calteau A."/>
            <person name="Chiapello H."/>
            <person name="Clermont O."/>
            <person name="Cruveiller S."/>
            <person name="Danchin A."/>
            <person name="Diard M."/>
            <person name="Dossat C."/>
            <person name="Karoui M.E."/>
            <person name="Frapy E."/>
            <person name="Garry L."/>
            <person name="Ghigo J.M."/>
            <person name="Gilles A.M."/>
            <person name="Johnson J."/>
            <person name="Le Bouguenec C."/>
            <person name="Lescat M."/>
            <person name="Mangenot S."/>
            <person name="Martinez-Jehanne V."/>
            <person name="Matic I."/>
            <person name="Nassif X."/>
            <person name="Oztas S."/>
            <person name="Petit M.A."/>
            <person name="Pichon C."/>
            <person name="Rouy Z."/>
            <person name="Ruf C.S."/>
            <person name="Schneider D."/>
            <person name="Tourret J."/>
            <person name="Vacherie B."/>
            <person name="Vallenet D."/>
            <person name="Medigue C."/>
            <person name="Rocha E.P.C."/>
            <person name="Denamur E."/>
        </authorList>
    </citation>
    <scope>NUCLEOTIDE SEQUENCE [LARGE SCALE GENOMIC DNA]</scope>
    <source>
        <strain>IAI1</strain>
    </source>
</reference>
<gene>
    <name evidence="1" type="primary">murA</name>
    <name type="ordered locus">ECIAI1_3337</name>
</gene>
<dbReference type="EC" id="2.5.1.7" evidence="1"/>
<dbReference type="EMBL" id="CU928160">
    <property type="protein sequence ID" value="CAR00151.1"/>
    <property type="molecule type" value="Genomic_DNA"/>
</dbReference>
<dbReference type="RefSeq" id="WP_000357259.1">
    <property type="nucleotide sequence ID" value="NC_011741.1"/>
</dbReference>
<dbReference type="SMR" id="B7M095"/>
<dbReference type="GeneID" id="93778792"/>
<dbReference type="KEGG" id="ecr:ECIAI1_3337"/>
<dbReference type="HOGENOM" id="CLU_027387_0_0_6"/>
<dbReference type="UniPathway" id="UPA00219"/>
<dbReference type="GO" id="GO:0005737">
    <property type="term" value="C:cytoplasm"/>
    <property type="evidence" value="ECO:0007669"/>
    <property type="project" value="UniProtKB-SubCell"/>
</dbReference>
<dbReference type="GO" id="GO:0008760">
    <property type="term" value="F:UDP-N-acetylglucosamine 1-carboxyvinyltransferase activity"/>
    <property type="evidence" value="ECO:0007669"/>
    <property type="project" value="UniProtKB-UniRule"/>
</dbReference>
<dbReference type="GO" id="GO:0051301">
    <property type="term" value="P:cell division"/>
    <property type="evidence" value="ECO:0007669"/>
    <property type="project" value="UniProtKB-KW"/>
</dbReference>
<dbReference type="GO" id="GO:0071555">
    <property type="term" value="P:cell wall organization"/>
    <property type="evidence" value="ECO:0007669"/>
    <property type="project" value="UniProtKB-KW"/>
</dbReference>
<dbReference type="GO" id="GO:0009252">
    <property type="term" value="P:peptidoglycan biosynthetic process"/>
    <property type="evidence" value="ECO:0007669"/>
    <property type="project" value="UniProtKB-UniRule"/>
</dbReference>
<dbReference type="GO" id="GO:0008360">
    <property type="term" value="P:regulation of cell shape"/>
    <property type="evidence" value="ECO:0007669"/>
    <property type="project" value="UniProtKB-KW"/>
</dbReference>
<dbReference type="GO" id="GO:0019277">
    <property type="term" value="P:UDP-N-acetylgalactosamine biosynthetic process"/>
    <property type="evidence" value="ECO:0007669"/>
    <property type="project" value="InterPro"/>
</dbReference>
<dbReference type="CDD" id="cd01555">
    <property type="entry name" value="UdpNAET"/>
    <property type="match status" value="1"/>
</dbReference>
<dbReference type="FunFam" id="3.65.10.10:FF:000002">
    <property type="entry name" value="UDP-N-acetylglucosamine 1-carboxyvinyltransferase"/>
    <property type="match status" value="1"/>
</dbReference>
<dbReference type="Gene3D" id="3.65.10.10">
    <property type="entry name" value="Enolpyruvate transferase domain"/>
    <property type="match status" value="2"/>
</dbReference>
<dbReference type="HAMAP" id="MF_00111">
    <property type="entry name" value="MurA"/>
    <property type="match status" value="1"/>
</dbReference>
<dbReference type="InterPro" id="IPR001986">
    <property type="entry name" value="Enolpyruvate_Tfrase_dom"/>
</dbReference>
<dbReference type="InterPro" id="IPR036968">
    <property type="entry name" value="Enolpyruvate_Tfrase_sf"/>
</dbReference>
<dbReference type="InterPro" id="IPR050068">
    <property type="entry name" value="MurA_subfamily"/>
</dbReference>
<dbReference type="InterPro" id="IPR013792">
    <property type="entry name" value="RNA3'P_cycl/enolpyr_Trfase_a/b"/>
</dbReference>
<dbReference type="InterPro" id="IPR005750">
    <property type="entry name" value="UDP_GlcNAc_COvinyl_MurA"/>
</dbReference>
<dbReference type="NCBIfam" id="TIGR01072">
    <property type="entry name" value="murA"/>
    <property type="match status" value="1"/>
</dbReference>
<dbReference type="NCBIfam" id="NF006873">
    <property type="entry name" value="PRK09369.1"/>
    <property type="match status" value="1"/>
</dbReference>
<dbReference type="PANTHER" id="PTHR43783">
    <property type="entry name" value="UDP-N-ACETYLGLUCOSAMINE 1-CARBOXYVINYLTRANSFERASE"/>
    <property type="match status" value="1"/>
</dbReference>
<dbReference type="PANTHER" id="PTHR43783:SF1">
    <property type="entry name" value="UDP-N-ACETYLGLUCOSAMINE 1-CARBOXYVINYLTRANSFERASE"/>
    <property type="match status" value="1"/>
</dbReference>
<dbReference type="Pfam" id="PF00275">
    <property type="entry name" value="EPSP_synthase"/>
    <property type="match status" value="1"/>
</dbReference>
<dbReference type="SUPFAM" id="SSF55205">
    <property type="entry name" value="EPT/RTPC-like"/>
    <property type="match status" value="1"/>
</dbReference>
<name>MURA_ECO8A</name>
<feature type="chain" id="PRO_1000117506" description="UDP-N-acetylglucosamine 1-carboxyvinyltransferase">
    <location>
        <begin position="1"/>
        <end position="419"/>
    </location>
</feature>
<feature type="active site" description="Proton donor" evidence="1">
    <location>
        <position position="115"/>
    </location>
</feature>
<feature type="binding site" evidence="1">
    <location>
        <begin position="22"/>
        <end position="23"/>
    </location>
    <ligand>
        <name>phosphoenolpyruvate</name>
        <dbReference type="ChEBI" id="CHEBI:58702"/>
    </ligand>
</feature>
<feature type="binding site" evidence="1">
    <location>
        <position position="91"/>
    </location>
    <ligand>
        <name>UDP-N-acetyl-alpha-D-glucosamine</name>
        <dbReference type="ChEBI" id="CHEBI:57705"/>
    </ligand>
</feature>
<feature type="binding site" evidence="1">
    <location>
        <begin position="120"/>
        <end position="124"/>
    </location>
    <ligand>
        <name>UDP-N-acetyl-alpha-D-glucosamine</name>
        <dbReference type="ChEBI" id="CHEBI:57705"/>
    </ligand>
</feature>
<feature type="binding site" evidence="1">
    <location>
        <begin position="160"/>
        <end position="163"/>
    </location>
    <ligand>
        <name>UDP-N-acetyl-alpha-D-glucosamine</name>
        <dbReference type="ChEBI" id="CHEBI:57705"/>
    </ligand>
</feature>
<feature type="binding site" evidence="1">
    <location>
        <position position="305"/>
    </location>
    <ligand>
        <name>UDP-N-acetyl-alpha-D-glucosamine</name>
        <dbReference type="ChEBI" id="CHEBI:57705"/>
    </ligand>
</feature>
<feature type="binding site" evidence="1">
    <location>
        <position position="327"/>
    </location>
    <ligand>
        <name>UDP-N-acetyl-alpha-D-glucosamine</name>
        <dbReference type="ChEBI" id="CHEBI:57705"/>
    </ligand>
</feature>
<feature type="modified residue" description="2-(S-cysteinyl)pyruvic acid O-phosphothioketal" evidence="1">
    <location>
        <position position="115"/>
    </location>
</feature>